<feature type="chain" id="PRO_1000101223" description="Glycine--tRNA ligase alpha subunit">
    <location>
        <begin position="1"/>
        <end position="303"/>
    </location>
</feature>
<sequence>MQKFDTRTFQGLILTLQDYWARQGCTIVQPLDMEVGAGTSHPMTCLRALGPEPMATAYVQPSRRPTDGRYGENPNRLQHYYQFQVVIKPSPDNIQELYLGSLKELGMDPTIHDIRFVEDNWENPTLGAWGLGWEVWLNGMEVTQFTYFQQVGGLECKPVTGEITYGLERLAMYIQGVDSVYDLVWSDGPLGKTTYGDVFHQNEVEQSTYNFEYADVDFLFTCFEQYEKEAQQLLALENPLPLPAYERILKAAHSFNLLDARKAISVTERQRYILRIRTLTKAVAEAYYASREALGFPMCNKDK</sequence>
<proteinExistence type="inferred from homology"/>
<protein>
    <recommendedName>
        <fullName evidence="1">Glycine--tRNA ligase alpha subunit</fullName>
        <ecNumber evidence="1">6.1.1.14</ecNumber>
    </recommendedName>
    <alternativeName>
        <fullName evidence="1">Glycyl-tRNA synthetase alpha subunit</fullName>
        <shortName evidence="1">GlyRS</shortName>
    </alternativeName>
</protein>
<comment type="catalytic activity">
    <reaction evidence="1">
        <text>tRNA(Gly) + glycine + ATP = glycyl-tRNA(Gly) + AMP + diphosphate</text>
        <dbReference type="Rhea" id="RHEA:16013"/>
        <dbReference type="Rhea" id="RHEA-COMP:9664"/>
        <dbReference type="Rhea" id="RHEA-COMP:9683"/>
        <dbReference type="ChEBI" id="CHEBI:30616"/>
        <dbReference type="ChEBI" id="CHEBI:33019"/>
        <dbReference type="ChEBI" id="CHEBI:57305"/>
        <dbReference type="ChEBI" id="CHEBI:78442"/>
        <dbReference type="ChEBI" id="CHEBI:78522"/>
        <dbReference type="ChEBI" id="CHEBI:456215"/>
        <dbReference type="EC" id="6.1.1.14"/>
    </reaction>
</comment>
<comment type="subunit">
    <text evidence="1">Tetramer of two alpha and two beta subunits.</text>
</comment>
<comment type="subcellular location">
    <subcellularLocation>
        <location evidence="1">Cytoplasm</location>
    </subcellularLocation>
</comment>
<comment type="similarity">
    <text evidence="1">Belongs to the class-II aminoacyl-tRNA synthetase family.</text>
</comment>
<dbReference type="EC" id="6.1.1.14" evidence="1"/>
<dbReference type="EMBL" id="CP001138">
    <property type="protein sequence ID" value="ACH49044.1"/>
    <property type="molecule type" value="Genomic_DNA"/>
</dbReference>
<dbReference type="RefSeq" id="WP_001168551.1">
    <property type="nucleotide sequence ID" value="NC_011149.1"/>
</dbReference>
<dbReference type="SMR" id="B5EX66"/>
<dbReference type="GeneID" id="89546728"/>
<dbReference type="KEGG" id="sea:SeAg_B3869"/>
<dbReference type="HOGENOM" id="CLU_057066_1_0_6"/>
<dbReference type="Proteomes" id="UP000008819">
    <property type="component" value="Chromosome"/>
</dbReference>
<dbReference type="GO" id="GO:0005829">
    <property type="term" value="C:cytosol"/>
    <property type="evidence" value="ECO:0007669"/>
    <property type="project" value="TreeGrafter"/>
</dbReference>
<dbReference type="GO" id="GO:0005524">
    <property type="term" value="F:ATP binding"/>
    <property type="evidence" value="ECO:0007669"/>
    <property type="project" value="UniProtKB-UniRule"/>
</dbReference>
<dbReference type="GO" id="GO:0004820">
    <property type="term" value="F:glycine-tRNA ligase activity"/>
    <property type="evidence" value="ECO:0007669"/>
    <property type="project" value="UniProtKB-UniRule"/>
</dbReference>
<dbReference type="GO" id="GO:0006426">
    <property type="term" value="P:glycyl-tRNA aminoacylation"/>
    <property type="evidence" value="ECO:0007669"/>
    <property type="project" value="UniProtKB-UniRule"/>
</dbReference>
<dbReference type="CDD" id="cd00733">
    <property type="entry name" value="GlyRS_alpha_core"/>
    <property type="match status" value="1"/>
</dbReference>
<dbReference type="FunFam" id="1.20.58.180:FF:000001">
    <property type="entry name" value="Glycine--tRNA ligase alpha subunit"/>
    <property type="match status" value="1"/>
</dbReference>
<dbReference type="FunFam" id="3.30.930.10:FF:000006">
    <property type="entry name" value="Glycine--tRNA ligase alpha subunit"/>
    <property type="match status" value="1"/>
</dbReference>
<dbReference type="Gene3D" id="3.30.930.10">
    <property type="entry name" value="Bira Bifunctional Protein, Domain 2"/>
    <property type="match status" value="1"/>
</dbReference>
<dbReference type="Gene3D" id="1.20.58.180">
    <property type="entry name" value="Class II aaRS and biotin synthetases, domain 2"/>
    <property type="match status" value="1"/>
</dbReference>
<dbReference type="HAMAP" id="MF_00254">
    <property type="entry name" value="Gly_tRNA_synth_alpha"/>
    <property type="match status" value="1"/>
</dbReference>
<dbReference type="InterPro" id="IPR045864">
    <property type="entry name" value="aa-tRNA-synth_II/BPL/LPL"/>
</dbReference>
<dbReference type="InterPro" id="IPR006194">
    <property type="entry name" value="Gly-tRNA-synth_heterodimer"/>
</dbReference>
<dbReference type="InterPro" id="IPR002310">
    <property type="entry name" value="Gly-tRNA_ligase_asu"/>
</dbReference>
<dbReference type="NCBIfam" id="TIGR00388">
    <property type="entry name" value="glyQ"/>
    <property type="match status" value="1"/>
</dbReference>
<dbReference type="NCBIfam" id="NF006827">
    <property type="entry name" value="PRK09348.1"/>
    <property type="match status" value="1"/>
</dbReference>
<dbReference type="PANTHER" id="PTHR30075:SF2">
    <property type="entry name" value="GLYCINE--TRNA LIGASE, CHLOROPLASTIC_MITOCHONDRIAL 2"/>
    <property type="match status" value="1"/>
</dbReference>
<dbReference type="PANTHER" id="PTHR30075">
    <property type="entry name" value="GLYCYL-TRNA SYNTHETASE"/>
    <property type="match status" value="1"/>
</dbReference>
<dbReference type="Pfam" id="PF02091">
    <property type="entry name" value="tRNA-synt_2e"/>
    <property type="match status" value="1"/>
</dbReference>
<dbReference type="PRINTS" id="PR01044">
    <property type="entry name" value="TRNASYNTHGA"/>
</dbReference>
<dbReference type="SUPFAM" id="SSF55681">
    <property type="entry name" value="Class II aaRS and biotin synthetases"/>
    <property type="match status" value="1"/>
</dbReference>
<dbReference type="PROSITE" id="PS50861">
    <property type="entry name" value="AA_TRNA_LIGASE_II_GLYAB"/>
    <property type="match status" value="1"/>
</dbReference>
<keyword id="KW-0030">Aminoacyl-tRNA synthetase</keyword>
<keyword id="KW-0067">ATP-binding</keyword>
<keyword id="KW-0963">Cytoplasm</keyword>
<keyword id="KW-0436">Ligase</keyword>
<keyword id="KW-0547">Nucleotide-binding</keyword>
<keyword id="KW-0648">Protein biosynthesis</keyword>
<name>SYGA_SALA4</name>
<reference key="1">
    <citation type="journal article" date="2011" name="J. Bacteriol.">
        <title>Comparative genomics of 28 Salmonella enterica isolates: evidence for CRISPR-mediated adaptive sublineage evolution.</title>
        <authorList>
            <person name="Fricke W.F."/>
            <person name="Mammel M.K."/>
            <person name="McDermott P.F."/>
            <person name="Tartera C."/>
            <person name="White D.G."/>
            <person name="Leclerc J.E."/>
            <person name="Ravel J."/>
            <person name="Cebula T.A."/>
        </authorList>
    </citation>
    <scope>NUCLEOTIDE SEQUENCE [LARGE SCALE GENOMIC DNA]</scope>
    <source>
        <strain>SL483</strain>
    </source>
</reference>
<evidence type="ECO:0000255" key="1">
    <source>
        <dbReference type="HAMAP-Rule" id="MF_00254"/>
    </source>
</evidence>
<accession>B5EX66</accession>
<organism>
    <name type="scientific">Salmonella agona (strain SL483)</name>
    <dbReference type="NCBI Taxonomy" id="454166"/>
    <lineage>
        <taxon>Bacteria</taxon>
        <taxon>Pseudomonadati</taxon>
        <taxon>Pseudomonadota</taxon>
        <taxon>Gammaproteobacteria</taxon>
        <taxon>Enterobacterales</taxon>
        <taxon>Enterobacteriaceae</taxon>
        <taxon>Salmonella</taxon>
    </lineage>
</organism>
<gene>
    <name evidence="1" type="primary">glyQ</name>
    <name type="ordered locus">SeAg_B3869</name>
</gene>